<sequence length="272" mass="29143">MKRRQRLTARSRLRAGIRCHNRFYNAMVQDLASAKRNGVYGERLAPLFSELVPAETLKTALGVSLAFEVNLGQRRPDCVCTVQFGKGSDAKGVCILIELKTCRFSKNMNTASKNLQRKGGMRPVHDSCRLLARTLPPGSGEIVLAPVLVFVAQRGMRVLRVTRLSPQVVYSNAAVLSCTISRLAEYAPPVSAKSTRRRCVAKGTKAKAFSTKAAAEPVPSITPAQPSAAAAVVSLFPAAVPANTTNAAAVHQPVAVSHVNPLAWAASLFSPK</sequence>
<reference key="1">
    <citation type="journal article" date="1988" name="Nucleic Acids Res.">
        <title>Evolution of the herpes thymidine kinase: identification and comparison of the equine herpesvirus 1 thymidine kinase gene reveals similarity to a cell-encoded thymidylate kinase.</title>
        <authorList>
            <person name="Robertson G.R."/>
            <person name="Whalley J.M."/>
        </authorList>
    </citation>
    <scope>NUCLEOTIDE SEQUENCE [GENOMIC DNA]</scope>
</reference>
<evidence type="ECO:0000305" key="1"/>
<organismHost>
    <name type="scientific">Equus caballus</name>
    <name type="common">Horse</name>
    <dbReference type="NCBI Taxonomy" id="9796"/>
</organismHost>
<feature type="chain" id="PRO_0000115979" description="Protein UL24 homolog">
    <location>
        <begin position="1"/>
        <end position="272"/>
    </location>
</feature>
<gene>
    <name type="primary">UL24</name>
</gene>
<protein>
    <recommendedName>
        <fullName>Protein UL24 homolog</fullName>
    </recommendedName>
</protein>
<accession>P09314</accession>
<name>UL24_EHV1</name>
<organism>
    <name type="scientific">Equine herpesvirus 1 (strain HVS25A)</name>
    <name type="common">EHV-1</name>
    <name type="synonym">Equine abortion virus</name>
    <dbReference type="NCBI Taxonomy" id="10327"/>
    <lineage>
        <taxon>Viruses</taxon>
        <taxon>Duplodnaviria</taxon>
        <taxon>Heunggongvirae</taxon>
        <taxon>Peploviricota</taxon>
        <taxon>Herviviricetes</taxon>
        <taxon>Herpesvirales</taxon>
        <taxon>Orthoherpesviridae</taxon>
        <taxon>Alphaherpesvirinae</taxon>
        <taxon>Varicellovirus</taxon>
        <taxon>Varicellovirus equidalpha1</taxon>
        <taxon>Equid alphaherpesvirus 1</taxon>
    </lineage>
</organism>
<dbReference type="EMBL" id="X13209">
    <property type="protein sequence ID" value="CAA31598.1"/>
    <property type="molecule type" value="Genomic_DNA"/>
</dbReference>
<dbReference type="PIR" id="S01994">
    <property type="entry name" value="S01994"/>
</dbReference>
<dbReference type="GO" id="GO:0039592">
    <property type="term" value="P:symbiont-mediated arrest of host cell cycle during G2/M transition"/>
    <property type="evidence" value="ECO:0007669"/>
    <property type="project" value="UniProtKB-KW"/>
</dbReference>
<dbReference type="InterPro" id="IPR002580">
    <property type="entry name" value="Herpes_UL24"/>
</dbReference>
<dbReference type="Pfam" id="PF01646">
    <property type="entry name" value="Herpes_UL24"/>
    <property type="match status" value="1"/>
</dbReference>
<proteinExistence type="inferred from homology"/>
<comment type="similarity">
    <text evidence="1">Belongs to the herpesviridae UL24 family.</text>
</comment>
<keyword id="KW-1079">Host G2/M cell cycle arrest by virus</keyword>
<keyword id="KW-0945">Host-virus interaction</keyword>
<keyword id="KW-1121">Modulation of host cell cycle by virus</keyword>